<keyword id="KW-0004">4Fe-4S</keyword>
<keyword id="KW-0963">Cytoplasm</keyword>
<keyword id="KW-1015">Disulfide bond</keyword>
<keyword id="KW-0408">Iron</keyword>
<keyword id="KW-0411">Iron-sulfur</keyword>
<keyword id="KW-0479">Metal-binding</keyword>
<keyword id="KW-0489">Methyltransferase</keyword>
<keyword id="KW-0698">rRNA processing</keyword>
<keyword id="KW-0949">S-adenosyl-L-methionine</keyword>
<keyword id="KW-0808">Transferase</keyword>
<keyword id="KW-0819">tRNA processing</keyword>
<name>RLMN_ACIBS</name>
<comment type="function">
    <text evidence="1">Specifically methylates position 2 of adenine 2503 in 23S rRNA and position 2 of adenine 37 in tRNAs. m2A2503 modification seems to play a crucial role in the proofreading step occurring at the peptidyl transferase center and thus would serve to optimize ribosomal fidelity.</text>
</comment>
<comment type="catalytic activity">
    <reaction evidence="1">
        <text>adenosine(2503) in 23S rRNA + 2 reduced [2Fe-2S]-[ferredoxin] + 2 S-adenosyl-L-methionine = 2-methyladenosine(2503) in 23S rRNA + 5'-deoxyadenosine + L-methionine + 2 oxidized [2Fe-2S]-[ferredoxin] + S-adenosyl-L-homocysteine</text>
        <dbReference type="Rhea" id="RHEA:42916"/>
        <dbReference type="Rhea" id="RHEA-COMP:10000"/>
        <dbReference type="Rhea" id="RHEA-COMP:10001"/>
        <dbReference type="Rhea" id="RHEA-COMP:10152"/>
        <dbReference type="Rhea" id="RHEA-COMP:10282"/>
        <dbReference type="ChEBI" id="CHEBI:17319"/>
        <dbReference type="ChEBI" id="CHEBI:33737"/>
        <dbReference type="ChEBI" id="CHEBI:33738"/>
        <dbReference type="ChEBI" id="CHEBI:57844"/>
        <dbReference type="ChEBI" id="CHEBI:57856"/>
        <dbReference type="ChEBI" id="CHEBI:59789"/>
        <dbReference type="ChEBI" id="CHEBI:74411"/>
        <dbReference type="ChEBI" id="CHEBI:74497"/>
        <dbReference type="EC" id="2.1.1.192"/>
    </reaction>
</comment>
<comment type="catalytic activity">
    <reaction evidence="1">
        <text>adenosine(37) in tRNA + 2 reduced [2Fe-2S]-[ferredoxin] + 2 S-adenosyl-L-methionine = 2-methyladenosine(37) in tRNA + 5'-deoxyadenosine + L-methionine + 2 oxidized [2Fe-2S]-[ferredoxin] + S-adenosyl-L-homocysteine</text>
        <dbReference type="Rhea" id="RHEA:43332"/>
        <dbReference type="Rhea" id="RHEA-COMP:10000"/>
        <dbReference type="Rhea" id="RHEA-COMP:10001"/>
        <dbReference type="Rhea" id="RHEA-COMP:10162"/>
        <dbReference type="Rhea" id="RHEA-COMP:10485"/>
        <dbReference type="ChEBI" id="CHEBI:17319"/>
        <dbReference type="ChEBI" id="CHEBI:33737"/>
        <dbReference type="ChEBI" id="CHEBI:33738"/>
        <dbReference type="ChEBI" id="CHEBI:57844"/>
        <dbReference type="ChEBI" id="CHEBI:57856"/>
        <dbReference type="ChEBI" id="CHEBI:59789"/>
        <dbReference type="ChEBI" id="CHEBI:74411"/>
        <dbReference type="ChEBI" id="CHEBI:74497"/>
        <dbReference type="EC" id="2.1.1.192"/>
    </reaction>
</comment>
<comment type="cofactor">
    <cofactor evidence="1">
        <name>[4Fe-4S] cluster</name>
        <dbReference type="ChEBI" id="CHEBI:49883"/>
    </cofactor>
    <text evidence="1">Binds 1 [4Fe-4S] cluster. The cluster is coordinated with 3 cysteines and an exchangeable S-adenosyl-L-methionine.</text>
</comment>
<comment type="subcellular location">
    <subcellularLocation>
        <location evidence="1">Cytoplasm</location>
    </subcellularLocation>
</comment>
<comment type="miscellaneous">
    <text evidence="1">Reaction proceeds by a ping-pong mechanism involving intermediate methylation of a conserved cysteine residue.</text>
</comment>
<comment type="similarity">
    <text evidence="1">Belongs to the radical SAM superfamily. RlmN family.</text>
</comment>
<gene>
    <name evidence="1" type="primary">rlmN</name>
    <name type="ordered locus">ABSDF3005</name>
</gene>
<proteinExistence type="inferred from homology"/>
<accession>B0VKS2</accession>
<feature type="chain" id="PRO_1000188541" description="Dual-specificity RNA methyltransferase RlmN">
    <location>
        <begin position="1"/>
        <end position="410"/>
    </location>
</feature>
<feature type="domain" description="Radical SAM core" evidence="2">
    <location>
        <begin position="130"/>
        <end position="373"/>
    </location>
</feature>
<feature type="region of interest" description="Disordered" evidence="3">
    <location>
        <begin position="7"/>
        <end position="26"/>
    </location>
</feature>
<feature type="compositionally biased region" description="Low complexity" evidence="3">
    <location>
        <begin position="15"/>
        <end position="26"/>
    </location>
</feature>
<feature type="active site" description="Proton acceptor" evidence="1">
    <location>
        <position position="120"/>
    </location>
</feature>
<feature type="active site" description="S-methylcysteine intermediate" evidence="1">
    <location>
        <position position="378"/>
    </location>
</feature>
<feature type="binding site" evidence="1">
    <location>
        <position position="144"/>
    </location>
    <ligand>
        <name>[4Fe-4S] cluster</name>
        <dbReference type="ChEBI" id="CHEBI:49883"/>
        <note>4Fe-4S-S-AdoMet</note>
    </ligand>
</feature>
<feature type="binding site" evidence="1">
    <location>
        <position position="148"/>
    </location>
    <ligand>
        <name>[4Fe-4S] cluster</name>
        <dbReference type="ChEBI" id="CHEBI:49883"/>
        <note>4Fe-4S-S-AdoMet</note>
    </ligand>
</feature>
<feature type="binding site" evidence="1">
    <location>
        <position position="151"/>
    </location>
    <ligand>
        <name>[4Fe-4S] cluster</name>
        <dbReference type="ChEBI" id="CHEBI:49883"/>
        <note>4Fe-4S-S-AdoMet</note>
    </ligand>
</feature>
<feature type="binding site" evidence="1">
    <location>
        <begin position="200"/>
        <end position="201"/>
    </location>
    <ligand>
        <name>S-adenosyl-L-methionine</name>
        <dbReference type="ChEBI" id="CHEBI:59789"/>
    </ligand>
</feature>
<feature type="binding site" evidence="1">
    <location>
        <position position="232"/>
    </location>
    <ligand>
        <name>S-adenosyl-L-methionine</name>
        <dbReference type="ChEBI" id="CHEBI:59789"/>
    </ligand>
</feature>
<feature type="binding site" evidence="1">
    <location>
        <begin position="254"/>
        <end position="256"/>
    </location>
    <ligand>
        <name>S-adenosyl-L-methionine</name>
        <dbReference type="ChEBI" id="CHEBI:59789"/>
    </ligand>
</feature>
<feature type="binding site" evidence="1">
    <location>
        <position position="335"/>
    </location>
    <ligand>
        <name>S-adenosyl-L-methionine</name>
        <dbReference type="ChEBI" id="CHEBI:59789"/>
    </ligand>
</feature>
<feature type="disulfide bond" description="(transient)" evidence="1">
    <location>
        <begin position="137"/>
        <end position="378"/>
    </location>
</feature>
<evidence type="ECO:0000255" key="1">
    <source>
        <dbReference type="HAMAP-Rule" id="MF_01849"/>
    </source>
</evidence>
<evidence type="ECO:0000255" key="2">
    <source>
        <dbReference type="PROSITE-ProRule" id="PRU01266"/>
    </source>
</evidence>
<evidence type="ECO:0000256" key="3">
    <source>
        <dbReference type="SAM" id="MobiDB-lite"/>
    </source>
</evidence>
<organism>
    <name type="scientific">Acinetobacter baumannii (strain SDF)</name>
    <dbReference type="NCBI Taxonomy" id="509170"/>
    <lineage>
        <taxon>Bacteria</taxon>
        <taxon>Pseudomonadati</taxon>
        <taxon>Pseudomonadota</taxon>
        <taxon>Gammaproteobacteria</taxon>
        <taxon>Moraxellales</taxon>
        <taxon>Moraxellaceae</taxon>
        <taxon>Acinetobacter</taxon>
        <taxon>Acinetobacter calcoaceticus/baumannii complex</taxon>
    </lineage>
</organism>
<reference key="1">
    <citation type="journal article" date="2008" name="PLoS ONE">
        <title>Comparative analysis of Acinetobacters: three genomes for three lifestyles.</title>
        <authorList>
            <person name="Vallenet D."/>
            <person name="Nordmann P."/>
            <person name="Barbe V."/>
            <person name="Poirel L."/>
            <person name="Mangenot S."/>
            <person name="Bataille E."/>
            <person name="Dossat C."/>
            <person name="Gas S."/>
            <person name="Kreimeyer A."/>
            <person name="Lenoble P."/>
            <person name="Oztas S."/>
            <person name="Poulain J."/>
            <person name="Segurens B."/>
            <person name="Robert C."/>
            <person name="Abergel C."/>
            <person name="Claverie J.-M."/>
            <person name="Raoult D."/>
            <person name="Medigue C."/>
            <person name="Weissenbach J."/>
            <person name="Cruveiller S."/>
        </authorList>
    </citation>
    <scope>NUCLEOTIDE SEQUENCE [LARGE SCALE GENOMIC DNA]</scope>
    <source>
        <strain>SDF</strain>
    </source>
</reference>
<protein>
    <recommendedName>
        <fullName evidence="1">Dual-specificity RNA methyltransferase RlmN</fullName>
        <ecNumber evidence="1">2.1.1.192</ecNumber>
    </recommendedName>
    <alternativeName>
        <fullName evidence="1">23S rRNA (adenine(2503)-C(2))-methyltransferase</fullName>
    </alternativeName>
    <alternativeName>
        <fullName evidence="1">23S rRNA m2A2503 methyltransferase</fullName>
    </alternativeName>
    <alternativeName>
        <fullName evidence="1">Ribosomal RNA large subunit methyltransferase N</fullName>
    </alternativeName>
    <alternativeName>
        <fullName evidence="1">tRNA (adenine(37)-C(2))-methyltransferase</fullName>
    </alternativeName>
    <alternativeName>
        <fullName evidence="1">tRNA m2A37 methyltransferase</fullName>
    </alternativeName>
</protein>
<dbReference type="EC" id="2.1.1.192" evidence="1"/>
<dbReference type="EMBL" id="CU468230">
    <property type="protein sequence ID" value="CAP02291.1"/>
    <property type="molecule type" value="Genomic_DNA"/>
</dbReference>
<dbReference type="SMR" id="B0VKS2"/>
<dbReference type="KEGG" id="abm:ABSDF3005"/>
<dbReference type="HOGENOM" id="CLU_029101_0_0_6"/>
<dbReference type="Proteomes" id="UP000001741">
    <property type="component" value="Chromosome"/>
</dbReference>
<dbReference type="GO" id="GO:0005737">
    <property type="term" value="C:cytoplasm"/>
    <property type="evidence" value="ECO:0007669"/>
    <property type="project" value="UniProtKB-SubCell"/>
</dbReference>
<dbReference type="GO" id="GO:0051539">
    <property type="term" value="F:4 iron, 4 sulfur cluster binding"/>
    <property type="evidence" value="ECO:0007669"/>
    <property type="project" value="UniProtKB-UniRule"/>
</dbReference>
<dbReference type="GO" id="GO:0046872">
    <property type="term" value="F:metal ion binding"/>
    <property type="evidence" value="ECO:0007669"/>
    <property type="project" value="UniProtKB-KW"/>
</dbReference>
<dbReference type="GO" id="GO:0070040">
    <property type="term" value="F:rRNA (adenine(2503)-C2-)-methyltransferase activity"/>
    <property type="evidence" value="ECO:0007669"/>
    <property type="project" value="UniProtKB-UniRule"/>
</dbReference>
<dbReference type="GO" id="GO:0019843">
    <property type="term" value="F:rRNA binding"/>
    <property type="evidence" value="ECO:0007669"/>
    <property type="project" value="UniProtKB-UniRule"/>
</dbReference>
<dbReference type="GO" id="GO:0002935">
    <property type="term" value="F:tRNA (adenine(37)-C2)-methyltransferase activity"/>
    <property type="evidence" value="ECO:0007669"/>
    <property type="project" value="UniProtKB-UniRule"/>
</dbReference>
<dbReference type="GO" id="GO:0000049">
    <property type="term" value="F:tRNA binding"/>
    <property type="evidence" value="ECO:0007669"/>
    <property type="project" value="UniProtKB-UniRule"/>
</dbReference>
<dbReference type="GO" id="GO:0070475">
    <property type="term" value="P:rRNA base methylation"/>
    <property type="evidence" value="ECO:0007669"/>
    <property type="project" value="UniProtKB-UniRule"/>
</dbReference>
<dbReference type="GO" id="GO:0030488">
    <property type="term" value="P:tRNA methylation"/>
    <property type="evidence" value="ECO:0007669"/>
    <property type="project" value="UniProtKB-UniRule"/>
</dbReference>
<dbReference type="CDD" id="cd01335">
    <property type="entry name" value="Radical_SAM"/>
    <property type="match status" value="1"/>
</dbReference>
<dbReference type="FunFam" id="1.10.150.530:FF:000003">
    <property type="entry name" value="Dual-specificity RNA methyltransferase RlmN"/>
    <property type="match status" value="1"/>
</dbReference>
<dbReference type="FunFam" id="3.20.20.70:FF:000008">
    <property type="entry name" value="Dual-specificity RNA methyltransferase RlmN"/>
    <property type="match status" value="1"/>
</dbReference>
<dbReference type="Gene3D" id="1.10.150.530">
    <property type="match status" value="1"/>
</dbReference>
<dbReference type="Gene3D" id="3.20.20.70">
    <property type="entry name" value="Aldolase class I"/>
    <property type="match status" value="1"/>
</dbReference>
<dbReference type="HAMAP" id="MF_01849">
    <property type="entry name" value="RNA_methyltr_RlmN"/>
    <property type="match status" value="1"/>
</dbReference>
<dbReference type="InterPro" id="IPR013785">
    <property type="entry name" value="Aldolase_TIM"/>
</dbReference>
<dbReference type="InterPro" id="IPR040072">
    <property type="entry name" value="Methyltransferase_A"/>
</dbReference>
<dbReference type="InterPro" id="IPR048641">
    <property type="entry name" value="RlmN_N"/>
</dbReference>
<dbReference type="InterPro" id="IPR027492">
    <property type="entry name" value="RNA_MTrfase_RlmN"/>
</dbReference>
<dbReference type="InterPro" id="IPR004383">
    <property type="entry name" value="rRNA_lsu_MTrfase_RlmN/Cfr"/>
</dbReference>
<dbReference type="InterPro" id="IPR007197">
    <property type="entry name" value="rSAM"/>
</dbReference>
<dbReference type="NCBIfam" id="TIGR00048">
    <property type="entry name" value="rRNA_mod_RlmN"/>
    <property type="match status" value="1"/>
</dbReference>
<dbReference type="PANTHER" id="PTHR30544">
    <property type="entry name" value="23S RRNA METHYLTRANSFERASE"/>
    <property type="match status" value="1"/>
</dbReference>
<dbReference type="PANTHER" id="PTHR30544:SF5">
    <property type="entry name" value="RADICAL SAM CORE DOMAIN-CONTAINING PROTEIN"/>
    <property type="match status" value="1"/>
</dbReference>
<dbReference type="Pfam" id="PF04055">
    <property type="entry name" value="Radical_SAM"/>
    <property type="match status" value="1"/>
</dbReference>
<dbReference type="Pfam" id="PF21016">
    <property type="entry name" value="RlmN_N"/>
    <property type="match status" value="1"/>
</dbReference>
<dbReference type="PIRSF" id="PIRSF006004">
    <property type="entry name" value="CHP00048"/>
    <property type="match status" value="1"/>
</dbReference>
<dbReference type="SFLD" id="SFLDF00275">
    <property type="entry name" value="adenosine_C2_methyltransferase"/>
    <property type="match status" value="1"/>
</dbReference>
<dbReference type="SFLD" id="SFLDG01062">
    <property type="entry name" value="methyltransferase_(Class_A)"/>
    <property type="match status" value="1"/>
</dbReference>
<dbReference type="SUPFAM" id="SSF102114">
    <property type="entry name" value="Radical SAM enzymes"/>
    <property type="match status" value="1"/>
</dbReference>
<dbReference type="PROSITE" id="PS51918">
    <property type="entry name" value="RADICAL_SAM"/>
    <property type="match status" value="1"/>
</dbReference>
<sequence>MSSAVVVSSENLDGQQQSSSTPASPAAEKVNLLGMSRAELEKFFEDIGEKKFRAGQVMKWIHQYFVTDFAEMTNISGKLRAKLEQICEIKAPEVVHRHYSKDGTRKWVFRVGEGSGSLVETVLIPAEDKTGSRKTLCISSQVGCALDCSFCSTGKQGFQRDLTPDEIIGQLWMANYSYMEEVPVAERERSVTNVVMMGMGEPLLNYDAVLSSMHIMLDDFAYGMSKRRVTLSTSGVVPKIDQLAKDIDVALAISLHAPNDELRNELVPINKKYPLAQLIAACQRYIAKDGNESARKHVTIEYVMLEGVNDQPEHAQQLLKLLKNLPSKINLIPFNPFPHAPYGRSSRNRIISFQKTLSDAGFVCTIRQTRGDDIDAACGQLVGQVADRTRRAEQWQKKVAQRQEILRTQG</sequence>